<reference key="1">
    <citation type="journal article" date="2002" name="Proc. Natl. Acad. Sci. U.S.A.">
        <title>Genome sequence of a serotype M3 strain of group A Streptococcus: phage-encoded toxins, the high-virulence phenotype, and clone emergence.</title>
        <authorList>
            <person name="Beres S.B."/>
            <person name="Sylva G.L."/>
            <person name="Barbian K.D."/>
            <person name="Lei B."/>
            <person name="Hoff J.S."/>
            <person name="Mammarella N.D."/>
            <person name="Liu M.-Y."/>
            <person name="Smoot J.C."/>
            <person name="Porcella S.F."/>
            <person name="Parkins L.D."/>
            <person name="Campbell D.S."/>
            <person name="Smith T.M."/>
            <person name="McCormick J.K."/>
            <person name="Leung D.Y.M."/>
            <person name="Schlievert P.M."/>
            <person name="Musser J.M."/>
        </authorList>
    </citation>
    <scope>NUCLEOTIDE SEQUENCE [LARGE SCALE GENOMIC DNA]</scope>
    <source>
        <strain>ATCC BAA-595 / MGAS315</strain>
    </source>
</reference>
<organism>
    <name type="scientific">Streptococcus pyogenes serotype M3 (strain ATCC BAA-595 / MGAS315)</name>
    <dbReference type="NCBI Taxonomy" id="198466"/>
    <lineage>
        <taxon>Bacteria</taxon>
        <taxon>Bacillati</taxon>
        <taxon>Bacillota</taxon>
        <taxon>Bacilli</taxon>
        <taxon>Lactobacillales</taxon>
        <taxon>Streptococcaceae</taxon>
        <taxon>Streptococcus</taxon>
    </lineage>
</organism>
<protein>
    <recommendedName>
        <fullName evidence="1">Small ribosomal subunit protein uS12</fullName>
    </recommendedName>
    <alternativeName>
        <fullName evidence="3">30S ribosomal protein S12</fullName>
    </alternativeName>
</protein>
<proteinExistence type="inferred from homology"/>
<evidence type="ECO:0000255" key="1">
    <source>
        <dbReference type="HAMAP-Rule" id="MF_00403"/>
    </source>
</evidence>
<evidence type="ECO:0000256" key="2">
    <source>
        <dbReference type="SAM" id="MobiDB-lite"/>
    </source>
</evidence>
<evidence type="ECO:0000305" key="3"/>
<comment type="function">
    <text evidence="1">With S4 and S5 plays an important role in translational accuracy.</text>
</comment>
<comment type="function">
    <text evidence="1">Interacts with and stabilizes bases of the 16S rRNA that are involved in tRNA selection in the A site and with the mRNA backbone. Located at the interface of the 30S and 50S subunits, it traverses the body of the 30S subunit contacting proteins on the other side and probably holding the rRNA structure together. The combined cluster of proteins S8, S12 and S17 appears to hold together the shoulder and platform of the 30S subunit.</text>
</comment>
<comment type="subunit">
    <text evidence="1">Part of the 30S ribosomal subunit. Contacts proteins S8 and S17. May interact with IF1 in the 30S initiation complex.</text>
</comment>
<comment type="similarity">
    <text evidence="1">Belongs to the universal ribosomal protein uS12 family.</text>
</comment>
<comment type="caution">
    <text evidence="3">Because the enzyme that would modify Asp-102 to 3-methylthioaspartic acid has not been found in the proteome of this organism, that modification is not predicted.</text>
</comment>
<feature type="chain" id="PRO_0000146328" description="Small ribosomal subunit protein uS12">
    <location>
        <begin position="1"/>
        <end position="137"/>
    </location>
</feature>
<feature type="region of interest" description="Disordered" evidence="2">
    <location>
        <begin position="1"/>
        <end position="21"/>
    </location>
</feature>
<feature type="region of interest" description="Disordered" evidence="2">
    <location>
        <begin position="33"/>
        <end position="57"/>
    </location>
</feature>
<sequence>MPTINQLVRKPRKSKIEKSDSPALNIGYNSHKKVQTKMAAPQKRGVATRVGTMTPKKPNSALRKFARVRLSNLIEVTAYIPGIGHNLQEHSVVLIRGGRVKDLPGVRYHIVRGALDTAGVADRKQGRSKYGAKRPKG</sequence>
<name>RS12_STRP3</name>
<accession>P0DE66</accession>
<accession>P58172</accession>
<accession>P66377</accession>
<dbReference type="EMBL" id="AE014074">
    <property type="protein sequence ID" value="AAM78805.1"/>
    <property type="molecule type" value="Genomic_DNA"/>
</dbReference>
<dbReference type="RefSeq" id="WP_002986049.1">
    <property type="nucleotide sequence ID" value="NC_004070.1"/>
</dbReference>
<dbReference type="SMR" id="P0DE66"/>
<dbReference type="GeneID" id="69900197"/>
<dbReference type="KEGG" id="spg:SpyM3_0198"/>
<dbReference type="HOGENOM" id="CLU_104295_1_2_9"/>
<dbReference type="Proteomes" id="UP000000564">
    <property type="component" value="Chromosome"/>
</dbReference>
<dbReference type="GO" id="GO:0015935">
    <property type="term" value="C:small ribosomal subunit"/>
    <property type="evidence" value="ECO:0007669"/>
    <property type="project" value="InterPro"/>
</dbReference>
<dbReference type="GO" id="GO:0019843">
    <property type="term" value="F:rRNA binding"/>
    <property type="evidence" value="ECO:0007669"/>
    <property type="project" value="UniProtKB-UniRule"/>
</dbReference>
<dbReference type="GO" id="GO:0003735">
    <property type="term" value="F:structural constituent of ribosome"/>
    <property type="evidence" value="ECO:0007669"/>
    <property type="project" value="InterPro"/>
</dbReference>
<dbReference type="GO" id="GO:0000049">
    <property type="term" value="F:tRNA binding"/>
    <property type="evidence" value="ECO:0007669"/>
    <property type="project" value="UniProtKB-UniRule"/>
</dbReference>
<dbReference type="GO" id="GO:0006412">
    <property type="term" value="P:translation"/>
    <property type="evidence" value="ECO:0007669"/>
    <property type="project" value="UniProtKB-UniRule"/>
</dbReference>
<dbReference type="CDD" id="cd03368">
    <property type="entry name" value="Ribosomal_S12"/>
    <property type="match status" value="1"/>
</dbReference>
<dbReference type="FunFam" id="2.40.50.140:FF:000001">
    <property type="entry name" value="30S ribosomal protein S12"/>
    <property type="match status" value="1"/>
</dbReference>
<dbReference type="Gene3D" id="2.40.50.140">
    <property type="entry name" value="Nucleic acid-binding proteins"/>
    <property type="match status" value="1"/>
</dbReference>
<dbReference type="HAMAP" id="MF_00403_B">
    <property type="entry name" value="Ribosomal_uS12_B"/>
    <property type="match status" value="1"/>
</dbReference>
<dbReference type="InterPro" id="IPR012340">
    <property type="entry name" value="NA-bd_OB-fold"/>
</dbReference>
<dbReference type="InterPro" id="IPR006032">
    <property type="entry name" value="Ribosomal_uS12"/>
</dbReference>
<dbReference type="InterPro" id="IPR005679">
    <property type="entry name" value="Ribosomal_uS12_bac"/>
</dbReference>
<dbReference type="NCBIfam" id="TIGR00981">
    <property type="entry name" value="rpsL_bact"/>
    <property type="match status" value="1"/>
</dbReference>
<dbReference type="PANTHER" id="PTHR11652">
    <property type="entry name" value="30S RIBOSOMAL PROTEIN S12 FAMILY MEMBER"/>
    <property type="match status" value="1"/>
</dbReference>
<dbReference type="Pfam" id="PF00164">
    <property type="entry name" value="Ribosom_S12_S23"/>
    <property type="match status" value="1"/>
</dbReference>
<dbReference type="PRINTS" id="PR01034">
    <property type="entry name" value="RIBOSOMALS12"/>
</dbReference>
<dbReference type="SUPFAM" id="SSF50249">
    <property type="entry name" value="Nucleic acid-binding proteins"/>
    <property type="match status" value="1"/>
</dbReference>
<dbReference type="PROSITE" id="PS00055">
    <property type="entry name" value="RIBOSOMAL_S12"/>
    <property type="match status" value="1"/>
</dbReference>
<keyword id="KW-0687">Ribonucleoprotein</keyword>
<keyword id="KW-0689">Ribosomal protein</keyword>
<keyword id="KW-0694">RNA-binding</keyword>
<keyword id="KW-0699">rRNA-binding</keyword>
<keyword id="KW-0820">tRNA-binding</keyword>
<gene>
    <name evidence="1" type="primary">rpsL</name>
    <name type="ordered locus">SpyM3_0198</name>
</gene>